<protein>
    <recommendedName>
        <fullName evidence="1">Small ribosomal subunit protein bS18c</fullName>
    </recommendedName>
    <alternativeName>
        <fullName evidence="3">30S ribosomal protein S18, chloroplastic</fullName>
    </alternativeName>
</protein>
<dbReference type="EMBL" id="DQ887677">
    <property type="protein sequence ID" value="ABI14494.1"/>
    <property type="molecule type" value="Genomic_DNA"/>
</dbReference>
<dbReference type="RefSeq" id="YP_784495.1">
    <property type="nucleotide sequence ID" value="NC_008457.1"/>
</dbReference>
<dbReference type="SMR" id="Q06GN8"/>
<dbReference type="GeneID" id="4363759"/>
<dbReference type="GO" id="GO:0009507">
    <property type="term" value="C:chloroplast"/>
    <property type="evidence" value="ECO:0007669"/>
    <property type="project" value="UniProtKB-SubCell"/>
</dbReference>
<dbReference type="GO" id="GO:0005763">
    <property type="term" value="C:mitochondrial small ribosomal subunit"/>
    <property type="evidence" value="ECO:0007669"/>
    <property type="project" value="TreeGrafter"/>
</dbReference>
<dbReference type="GO" id="GO:0070181">
    <property type="term" value="F:small ribosomal subunit rRNA binding"/>
    <property type="evidence" value="ECO:0007669"/>
    <property type="project" value="TreeGrafter"/>
</dbReference>
<dbReference type="GO" id="GO:0003735">
    <property type="term" value="F:structural constituent of ribosome"/>
    <property type="evidence" value="ECO:0007669"/>
    <property type="project" value="InterPro"/>
</dbReference>
<dbReference type="GO" id="GO:0006412">
    <property type="term" value="P:translation"/>
    <property type="evidence" value="ECO:0007669"/>
    <property type="project" value="UniProtKB-UniRule"/>
</dbReference>
<dbReference type="FunFam" id="4.10.640.10:FF:000002">
    <property type="entry name" value="30S ribosomal protein S18, chloroplastic"/>
    <property type="match status" value="1"/>
</dbReference>
<dbReference type="Gene3D" id="4.10.640.10">
    <property type="entry name" value="Ribosomal protein S18"/>
    <property type="match status" value="1"/>
</dbReference>
<dbReference type="HAMAP" id="MF_00270">
    <property type="entry name" value="Ribosomal_bS18"/>
    <property type="match status" value="1"/>
</dbReference>
<dbReference type="InterPro" id="IPR001648">
    <property type="entry name" value="Ribosomal_bS18"/>
</dbReference>
<dbReference type="InterPro" id="IPR018275">
    <property type="entry name" value="Ribosomal_bS18_CS"/>
</dbReference>
<dbReference type="InterPro" id="IPR036870">
    <property type="entry name" value="Ribosomal_bS18_sf"/>
</dbReference>
<dbReference type="NCBIfam" id="TIGR00165">
    <property type="entry name" value="S18"/>
    <property type="match status" value="1"/>
</dbReference>
<dbReference type="PANTHER" id="PTHR13479">
    <property type="entry name" value="30S RIBOSOMAL PROTEIN S18"/>
    <property type="match status" value="1"/>
</dbReference>
<dbReference type="PANTHER" id="PTHR13479:SF40">
    <property type="entry name" value="SMALL RIBOSOMAL SUBUNIT PROTEIN BS18M"/>
    <property type="match status" value="1"/>
</dbReference>
<dbReference type="Pfam" id="PF01084">
    <property type="entry name" value="Ribosomal_S18"/>
    <property type="match status" value="1"/>
</dbReference>
<dbReference type="PRINTS" id="PR00974">
    <property type="entry name" value="RIBOSOMALS18"/>
</dbReference>
<dbReference type="SUPFAM" id="SSF46911">
    <property type="entry name" value="Ribosomal protein S18"/>
    <property type="match status" value="1"/>
</dbReference>
<dbReference type="PROSITE" id="PS00057">
    <property type="entry name" value="RIBOSOMAL_S18"/>
    <property type="match status" value="1"/>
</dbReference>
<organism>
    <name type="scientific">Piper cenocladum</name>
    <name type="common">Ant piper</name>
    <dbReference type="NCBI Taxonomy" id="398741"/>
    <lineage>
        <taxon>Eukaryota</taxon>
        <taxon>Viridiplantae</taxon>
        <taxon>Streptophyta</taxon>
        <taxon>Embryophyta</taxon>
        <taxon>Tracheophyta</taxon>
        <taxon>Spermatophyta</taxon>
        <taxon>Magnoliopsida</taxon>
        <taxon>Magnoliidae</taxon>
        <taxon>Piperales</taxon>
        <taxon>Piperaceae</taxon>
        <taxon>Piper</taxon>
    </lineage>
</organism>
<geneLocation type="chloroplast"/>
<feature type="chain" id="PRO_0000276883" description="Small ribosomal subunit protein bS18c">
    <location>
        <begin position="1"/>
        <end position="102"/>
    </location>
</feature>
<feature type="region of interest" description="Disordered" evidence="2">
    <location>
        <begin position="1"/>
        <end position="26"/>
    </location>
</feature>
<feature type="compositionally biased region" description="Basic residues" evidence="2">
    <location>
        <begin position="1"/>
        <end position="19"/>
    </location>
</feature>
<name>RR18_PIPCE</name>
<reference key="1">
    <citation type="journal article" date="2006" name="BMC Evol. Biol.">
        <title>Complete plastid genome sequences of Drimys, Liriodendron, and Piper: implications for the phylogenetic relationships of magnoliids.</title>
        <authorList>
            <person name="Cai Z."/>
            <person name="Penaflor C."/>
            <person name="Kuehl J.V."/>
            <person name="Leebens-Mack J."/>
            <person name="Carlson J.E."/>
            <person name="dePamphilis C.W."/>
            <person name="Boore J.L."/>
            <person name="Jansen R.K."/>
        </authorList>
    </citation>
    <scope>NUCLEOTIDE SEQUENCE [LARGE SCALE GENOMIC DNA]</scope>
</reference>
<gene>
    <name evidence="1" type="primary">rps18</name>
</gene>
<comment type="subunit">
    <text>Part of the 30S ribosomal subunit.</text>
</comment>
<comment type="subcellular location">
    <subcellularLocation>
        <location>Plastid</location>
        <location>Chloroplast</location>
    </subcellularLocation>
</comment>
<comment type="similarity">
    <text evidence="1">Belongs to the bacterial ribosomal protein bS18 family.</text>
</comment>
<keyword id="KW-0150">Chloroplast</keyword>
<keyword id="KW-0934">Plastid</keyword>
<keyword id="KW-0687">Ribonucleoprotein</keyword>
<keyword id="KW-0689">Ribosomal protein</keyword>
<keyword id="KW-0694">RNA-binding</keyword>
<keyword id="KW-0699">rRNA-binding</keyword>
<evidence type="ECO:0000255" key="1">
    <source>
        <dbReference type="HAMAP-Rule" id="MF_00270"/>
    </source>
</evidence>
<evidence type="ECO:0000256" key="2">
    <source>
        <dbReference type="SAM" id="MobiDB-lite"/>
    </source>
</evidence>
<evidence type="ECO:0000305" key="3"/>
<proteinExistence type="inferred from homology"/>
<accession>Q06GN8</accession>
<sequence>MDKTKRPLRKSKRSFRRRLPPPIGSGDRIDYRNMSLISRFISEQGKILSRRVNRLTLKQQRLITIAIKQARILSSLPFLNNEKQFERPESIPKTAGPSIRNK</sequence>